<proteinExistence type="inferred from homology"/>
<reference key="1">
    <citation type="journal article" date="2006" name="Genome Res.">
        <title>Skewed genomic variability in strains of the toxigenic bacterial pathogen, Clostridium perfringens.</title>
        <authorList>
            <person name="Myers G.S.A."/>
            <person name="Rasko D.A."/>
            <person name="Cheung J.K."/>
            <person name="Ravel J."/>
            <person name="Seshadri R."/>
            <person name="DeBoy R.T."/>
            <person name="Ren Q."/>
            <person name="Varga J."/>
            <person name="Awad M.M."/>
            <person name="Brinkac L.M."/>
            <person name="Daugherty S.C."/>
            <person name="Haft D.H."/>
            <person name="Dodson R.J."/>
            <person name="Madupu R."/>
            <person name="Nelson W.C."/>
            <person name="Rosovitz M.J."/>
            <person name="Sullivan S.A."/>
            <person name="Khouri H."/>
            <person name="Dimitrov G.I."/>
            <person name="Watkins K.L."/>
            <person name="Mulligan S."/>
            <person name="Benton J."/>
            <person name="Radune D."/>
            <person name="Fisher D.J."/>
            <person name="Atkins H.S."/>
            <person name="Hiscox T."/>
            <person name="Jost B.H."/>
            <person name="Billington S.J."/>
            <person name="Songer J.G."/>
            <person name="McClane B.A."/>
            <person name="Titball R.W."/>
            <person name="Rood J.I."/>
            <person name="Melville S.B."/>
            <person name="Paulsen I.T."/>
        </authorList>
    </citation>
    <scope>NUCLEOTIDE SEQUENCE [LARGE SCALE GENOMIC DNA]</scope>
    <source>
        <strain>ATCC 13124 / DSM 756 / JCM 1290 / NCIMB 6125 / NCTC 8237 / S 107 / Type A</strain>
    </source>
</reference>
<protein>
    <recommendedName>
        <fullName evidence="1">3D-(3,5/4)-trihydroxycyclohexane-1,2-dione hydrolase</fullName>
        <shortName evidence="1">THcHDO hydrolase</shortName>
        <ecNumber evidence="1">3.7.1.22</ecNumber>
    </recommendedName>
</protein>
<organism>
    <name type="scientific">Clostridium perfringens (strain ATCC 13124 / DSM 756 / JCM 1290 / NCIMB 6125 / NCTC 8237 / Type A)</name>
    <dbReference type="NCBI Taxonomy" id="195103"/>
    <lineage>
        <taxon>Bacteria</taxon>
        <taxon>Bacillati</taxon>
        <taxon>Bacillota</taxon>
        <taxon>Clostridia</taxon>
        <taxon>Eubacteriales</taxon>
        <taxon>Clostridiaceae</taxon>
        <taxon>Clostridium</taxon>
    </lineage>
</organism>
<accession>Q0TUZ2</accession>
<dbReference type="EC" id="3.7.1.22" evidence="1"/>
<dbReference type="EMBL" id="CP000246">
    <property type="protein sequence ID" value="ABG84674.1"/>
    <property type="molecule type" value="Genomic_DNA"/>
</dbReference>
<dbReference type="RefSeq" id="WP_003459928.1">
    <property type="nucleotide sequence ID" value="NC_008261.1"/>
</dbReference>
<dbReference type="SMR" id="Q0TUZ2"/>
<dbReference type="STRING" id="195103.CPF_0084"/>
<dbReference type="PaxDb" id="195103-CPF_0084"/>
<dbReference type="GeneID" id="93000605"/>
<dbReference type="KEGG" id="cpf:CPF_0084"/>
<dbReference type="eggNOG" id="COG3962">
    <property type="taxonomic scope" value="Bacteria"/>
</dbReference>
<dbReference type="HOGENOM" id="CLU_013748_6_0_9"/>
<dbReference type="UniPathway" id="UPA00076">
    <property type="reaction ID" value="UER00145"/>
</dbReference>
<dbReference type="Proteomes" id="UP000001823">
    <property type="component" value="Chromosome"/>
</dbReference>
<dbReference type="GO" id="GO:0005948">
    <property type="term" value="C:acetolactate synthase complex"/>
    <property type="evidence" value="ECO:0007669"/>
    <property type="project" value="TreeGrafter"/>
</dbReference>
<dbReference type="GO" id="GO:0102481">
    <property type="term" value="F:3D-(3,5/4)-trihydroxycyclohexane-1,2-dione hydrolase activity"/>
    <property type="evidence" value="ECO:0007669"/>
    <property type="project" value="UniProtKB-EC"/>
</dbReference>
<dbReference type="GO" id="GO:0003984">
    <property type="term" value="F:acetolactate synthase activity"/>
    <property type="evidence" value="ECO:0007669"/>
    <property type="project" value="TreeGrafter"/>
</dbReference>
<dbReference type="GO" id="GO:0050660">
    <property type="term" value="F:flavin adenine dinucleotide binding"/>
    <property type="evidence" value="ECO:0007669"/>
    <property type="project" value="TreeGrafter"/>
</dbReference>
<dbReference type="GO" id="GO:0000287">
    <property type="term" value="F:magnesium ion binding"/>
    <property type="evidence" value="ECO:0007669"/>
    <property type="project" value="UniProtKB-UniRule"/>
</dbReference>
<dbReference type="GO" id="GO:0030976">
    <property type="term" value="F:thiamine pyrophosphate binding"/>
    <property type="evidence" value="ECO:0007669"/>
    <property type="project" value="UniProtKB-UniRule"/>
</dbReference>
<dbReference type="GO" id="GO:0019310">
    <property type="term" value="P:inositol catabolic process"/>
    <property type="evidence" value="ECO:0007669"/>
    <property type="project" value="UniProtKB-UniRule"/>
</dbReference>
<dbReference type="GO" id="GO:0009097">
    <property type="term" value="P:isoleucine biosynthetic process"/>
    <property type="evidence" value="ECO:0007669"/>
    <property type="project" value="TreeGrafter"/>
</dbReference>
<dbReference type="GO" id="GO:0009099">
    <property type="term" value="P:L-valine biosynthetic process"/>
    <property type="evidence" value="ECO:0007669"/>
    <property type="project" value="TreeGrafter"/>
</dbReference>
<dbReference type="CDD" id="cd02003">
    <property type="entry name" value="TPP_IolD"/>
    <property type="match status" value="1"/>
</dbReference>
<dbReference type="CDD" id="cd07035">
    <property type="entry name" value="TPP_PYR_POX_like"/>
    <property type="match status" value="1"/>
</dbReference>
<dbReference type="Gene3D" id="3.40.50.970">
    <property type="match status" value="2"/>
</dbReference>
<dbReference type="Gene3D" id="3.40.50.1220">
    <property type="entry name" value="TPP-binding domain"/>
    <property type="match status" value="1"/>
</dbReference>
<dbReference type="HAMAP" id="MF_01669">
    <property type="entry name" value="IolD"/>
    <property type="match status" value="1"/>
</dbReference>
<dbReference type="InterPro" id="IPR029035">
    <property type="entry name" value="DHS-like_NAD/FAD-binding_dom"/>
</dbReference>
<dbReference type="InterPro" id="IPR030817">
    <property type="entry name" value="Myo_inos_IolD"/>
</dbReference>
<dbReference type="InterPro" id="IPR023757">
    <property type="entry name" value="THcHDO_hydrolase_firmi"/>
</dbReference>
<dbReference type="InterPro" id="IPR029061">
    <property type="entry name" value="THDP-binding"/>
</dbReference>
<dbReference type="InterPro" id="IPR012000">
    <property type="entry name" value="Thiamin_PyroP_enz_cen_dom"/>
</dbReference>
<dbReference type="InterPro" id="IPR012001">
    <property type="entry name" value="Thiamin_PyroP_enz_TPP-bd_dom"/>
</dbReference>
<dbReference type="InterPro" id="IPR000399">
    <property type="entry name" value="TPP-bd_CS"/>
</dbReference>
<dbReference type="InterPro" id="IPR045229">
    <property type="entry name" value="TPP_enz"/>
</dbReference>
<dbReference type="InterPro" id="IPR011766">
    <property type="entry name" value="TPP_enzyme_TPP-bd"/>
</dbReference>
<dbReference type="NCBIfam" id="TIGR04377">
    <property type="entry name" value="myo_inos_iolD"/>
    <property type="match status" value="1"/>
</dbReference>
<dbReference type="PANTHER" id="PTHR18968:SF9">
    <property type="entry name" value="3D-(3,5_4)-TRIHYDROXYCYCLOHEXANE-1,2-DIONE HYDROLASE"/>
    <property type="match status" value="1"/>
</dbReference>
<dbReference type="PANTHER" id="PTHR18968">
    <property type="entry name" value="THIAMINE PYROPHOSPHATE ENZYMES"/>
    <property type="match status" value="1"/>
</dbReference>
<dbReference type="Pfam" id="PF02775">
    <property type="entry name" value="TPP_enzyme_C"/>
    <property type="match status" value="1"/>
</dbReference>
<dbReference type="Pfam" id="PF00205">
    <property type="entry name" value="TPP_enzyme_M"/>
    <property type="match status" value="1"/>
</dbReference>
<dbReference type="Pfam" id="PF02776">
    <property type="entry name" value="TPP_enzyme_N"/>
    <property type="match status" value="1"/>
</dbReference>
<dbReference type="SUPFAM" id="SSF52467">
    <property type="entry name" value="DHS-like NAD/FAD-binding domain"/>
    <property type="match status" value="1"/>
</dbReference>
<dbReference type="SUPFAM" id="SSF52518">
    <property type="entry name" value="Thiamin diphosphate-binding fold (THDP-binding)"/>
    <property type="match status" value="2"/>
</dbReference>
<dbReference type="PROSITE" id="PS00187">
    <property type="entry name" value="TPP_ENZYMES"/>
    <property type="match status" value="1"/>
</dbReference>
<gene>
    <name evidence="1" type="primary">iolD</name>
    <name type="ordered locus">CPF_0084</name>
</gene>
<name>IOLD_CLOP1</name>
<evidence type="ECO:0000255" key="1">
    <source>
        <dbReference type="HAMAP-Rule" id="MF_01669"/>
    </source>
</evidence>
<comment type="function">
    <text evidence="1">Involved in the cleavage of the C1-C2 bond of 3D-(3,5/4)-trihydroxycyclohexane-1,2-dione (THcHDO) to yield 5-deoxy-glucuronate (5DG).</text>
</comment>
<comment type="catalytic activity">
    <reaction evidence="1">
        <text>3D-3,5/4-trihydroxycyclohexane-1,2-dione + H2O = 5-deoxy-D-glucuronate + H(+)</text>
        <dbReference type="Rhea" id="RHEA:25836"/>
        <dbReference type="ChEBI" id="CHEBI:15377"/>
        <dbReference type="ChEBI" id="CHEBI:15378"/>
        <dbReference type="ChEBI" id="CHEBI:28446"/>
        <dbReference type="ChEBI" id="CHEBI:58852"/>
        <dbReference type="EC" id="3.7.1.22"/>
    </reaction>
</comment>
<comment type="cofactor">
    <cofactor evidence="1">
        <name>Mg(2+)</name>
        <dbReference type="ChEBI" id="CHEBI:18420"/>
    </cofactor>
    <text evidence="1">Binds 1 Mg(2+) ion per subunit.</text>
</comment>
<comment type="cofactor">
    <cofactor evidence="1">
        <name>thiamine diphosphate</name>
        <dbReference type="ChEBI" id="CHEBI:58937"/>
    </cofactor>
    <text evidence="1">Binds 1 thiamine pyrophosphate per subunit.</text>
</comment>
<comment type="pathway">
    <text evidence="1">Polyol metabolism; myo-inositol degradation into acetyl-CoA; acetyl-CoA from myo-inositol: step 3/7.</text>
</comment>
<comment type="similarity">
    <text evidence="1">Belongs to the TPP enzyme family.</text>
</comment>
<sequence length="639" mass="70467">MRMTTGQALVKFLDNQYVSFDGKEEKFVDGIFTIFGHGIVVGLGEALYENPGELKVYQGRNEQGMAHVSTAFAKQNNRRKIIACSSSVGPGAANMVTAAATATVNNIPLLLLPGDSFATRQPDPVLQQIEQSYNLGITTNDAFKPVCKYWDRINRPEQLMSAMINAMRVLTDPAETGAVCIALPQDVQGEAYDFPEYFFKKRVHRITRPLAVQEEFEEALDIIMNKKKPIIICGGGVRYSEAGEALVDFAEEFNIPICETQAGKSAIKSSHPLNLGGIGVTGNLAANMIAKDADLVIGVGTRFSDFTTSSKSLFKNPEVDFITVNVSKFHGEKMDAHKIIGDAKVCIEELQAMLEANNYESSYEDEIVNAKKAWKEEMKRLTNIKYDENFEALIKPKREGCIEEFSVLTGGLITQTAALGVIRETIDDDAIVVGAAGSLPGDLQRMWETDVRDSYHMEYGYSCMGYEIAATLGAKLAEPEREVYSMVGDGSYLMLHSEMVTAMQEQKKINILLFDNCGFGCINNLQMSNGIGSLATEFRYRDENGKLEGGLIPIDFAKVASGYGLKTYSVKTLAQLKEALEDAKKQKVSTLIDIKVLPKTMTDGYDAWWHVGIAGESKIDGVNKAFENKEKNLKAARRY</sequence>
<feature type="chain" id="PRO_0000352540" description="3D-(3,5/4)-trihydroxycyclohexane-1,2-dione hydrolase">
    <location>
        <begin position="1"/>
        <end position="639"/>
    </location>
</feature>
<feature type="region of interest" description="Thiamine pyrophosphate binding" evidence="1">
    <location>
        <begin position="438"/>
        <end position="518"/>
    </location>
</feature>
<feature type="binding site" evidence="1">
    <location>
        <position position="62"/>
    </location>
    <ligand>
        <name>thiamine diphosphate</name>
        <dbReference type="ChEBI" id="CHEBI:58937"/>
    </ligand>
</feature>
<feature type="binding site" evidence="1">
    <location>
        <position position="489"/>
    </location>
    <ligand>
        <name>Mg(2+)</name>
        <dbReference type="ChEBI" id="CHEBI:18420"/>
    </ligand>
</feature>
<feature type="binding site" evidence="1">
    <location>
        <position position="516"/>
    </location>
    <ligand>
        <name>Mg(2+)</name>
        <dbReference type="ChEBI" id="CHEBI:18420"/>
    </ligand>
</feature>
<keyword id="KW-0378">Hydrolase</keyword>
<keyword id="KW-0460">Magnesium</keyword>
<keyword id="KW-0479">Metal-binding</keyword>
<keyword id="KW-0520">NAD</keyword>
<keyword id="KW-0786">Thiamine pyrophosphate</keyword>